<keyword id="KW-0067">ATP-binding</keyword>
<keyword id="KW-1003">Cell membrane</keyword>
<keyword id="KW-0325">Glycoprotein</keyword>
<keyword id="KW-0472">Membrane</keyword>
<keyword id="KW-0547">Nucleotide-binding</keyword>
<keyword id="KW-1185">Reference proteome</keyword>
<keyword id="KW-0677">Repeat</keyword>
<keyword id="KW-0812">Transmembrane</keyword>
<keyword id="KW-1133">Transmembrane helix</keyword>
<keyword id="KW-0813">Transport</keyword>
<accession>Q4X006</accession>
<feature type="chain" id="PRO_0000445096" description="ABC multidrug transporter A-2">
    <location>
        <begin position="1"/>
        <end position="1499"/>
    </location>
</feature>
<feature type="transmembrane region" description="Helical" evidence="1">
    <location>
        <begin position="526"/>
        <end position="546"/>
    </location>
</feature>
<feature type="transmembrane region" description="Helical" evidence="1">
    <location>
        <begin position="561"/>
        <end position="581"/>
    </location>
</feature>
<feature type="transmembrane region" description="Helical" evidence="1">
    <location>
        <begin position="606"/>
        <end position="626"/>
    </location>
</feature>
<feature type="transmembrane region" description="Helical" evidence="1">
    <location>
        <begin position="635"/>
        <end position="655"/>
    </location>
</feature>
<feature type="transmembrane region" description="Helical" evidence="1">
    <location>
        <begin position="669"/>
        <end position="689"/>
    </location>
</feature>
<feature type="transmembrane region" description="Helical" evidence="1">
    <location>
        <begin position="778"/>
        <end position="798"/>
    </location>
</feature>
<feature type="transmembrane region" description="Helical" evidence="1">
    <location>
        <begin position="1193"/>
        <end position="1213"/>
    </location>
</feature>
<feature type="transmembrane region" description="Helical" evidence="1">
    <location>
        <begin position="1227"/>
        <end position="1247"/>
    </location>
</feature>
<feature type="transmembrane region" description="Helical" evidence="1">
    <location>
        <begin position="1268"/>
        <end position="1288"/>
    </location>
</feature>
<feature type="transmembrane region" description="Helical" evidence="1">
    <location>
        <begin position="1317"/>
        <end position="1337"/>
    </location>
</feature>
<feature type="transmembrane region" description="Helical" evidence="1">
    <location>
        <begin position="1353"/>
        <end position="1373"/>
    </location>
</feature>
<feature type="transmembrane region" description="Helical" evidence="1">
    <location>
        <begin position="1466"/>
        <end position="1486"/>
    </location>
</feature>
<feature type="domain" description="ABC transporter 1" evidence="2">
    <location>
        <begin position="166"/>
        <end position="415"/>
    </location>
</feature>
<feature type="domain" description="ABC transporter 2" evidence="2">
    <location>
        <begin position="857"/>
        <end position="1100"/>
    </location>
</feature>
<feature type="region of interest" description="Disordered" evidence="4">
    <location>
        <begin position="1"/>
        <end position="66"/>
    </location>
</feature>
<feature type="region of interest" description="Disordered" evidence="4">
    <location>
        <begin position="80"/>
        <end position="107"/>
    </location>
</feature>
<feature type="compositionally biased region" description="Polar residues" evidence="4">
    <location>
        <begin position="16"/>
        <end position="30"/>
    </location>
</feature>
<feature type="compositionally biased region" description="Basic and acidic residues" evidence="4">
    <location>
        <begin position="31"/>
        <end position="51"/>
    </location>
</feature>
<feature type="compositionally biased region" description="Polar residues" evidence="4">
    <location>
        <begin position="80"/>
        <end position="94"/>
    </location>
</feature>
<feature type="binding site" evidence="2">
    <location>
        <begin position="893"/>
        <end position="900"/>
    </location>
    <ligand>
        <name>ATP</name>
        <dbReference type="ChEBI" id="CHEBI:30616"/>
    </ligand>
</feature>
<feature type="glycosylation site" description="N-linked (GlcNAc...) asparagine" evidence="3">
    <location>
        <position position="339"/>
    </location>
</feature>
<feature type="glycosylation site" description="N-linked (GlcNAc...) asparagine" evidence="3">
    <location>
        <position position="763"/>
    </location>
</feature>
<feature type="glycosylation site" description="N-linked (GlcNAc...) asparagine" evidence="3">
    <location>
        <position position="1414"/>
    </location>
</feature>
<gene>
    <name evidence="8" type="primary">abcA</name>
    <name type="ORF">AFUA_2G15130</name>
</gene>
<name>ABCA2_ASPFU</name>
<evidence type="ECO:0000255" key="1"/>
<evidence type="ECO:0000255" key="2">
    <source>
        <dbReference type="PROSITE-ProRule" id="PRU00434"/>
    </source>
</evidence>
<evidence type="ECO:0000255" key="3">
    <source>
        <dbReference type="PROSITE-ProRule" id="PRU00498"/>
    </source>
</evidence>
<evidence type="ECO:0000256" key="4">
    <source>
        <dbReference type="SAM" id="MobiDB-lite"/>
    </source>
</evidence>
<evidence type="ECO:0000269" key="5">
    <source>
    </source>
</evidence>
<evidence type="ECO:0000269" key="6">
    <source>
    </source>
</evidence>
<evidence type="ECO:0000269" key="7">
    <source>
    </source>
</evidence>
<evidence type="ECO:0000303" key="8">
    <source>
    </source>
</evidence>
<evidence type="ECO:0000305" key="9"/>
<proteinExistence type="evidence at protein level"/>
<dbReference type="EMBL" id="AAHF01000001">
    <property type="protein sequence ID" value="EAL93809.1"/>
    <property type="molecule type" value="Genomic_DNA"/>
</dbReference>
<dbReference type="RefSeq" id="XP_755847.1">
    <property type="nucleotide sequence ID" value="XM_750754.1"/>
</dbReference>
<dbReference type="SMR" id="Q4X006"/>
<dbReference type="FunCoup" id="Q4X006">
    <property type="interactions" value="361"/>
</dbReference>
<dbReference type="STRING" id="330879.Q4X006"/>
<dbReference type="GlyCosmos" id="Q4X006">
    <property type="glycosylation" value="3 sites, No reported glycans"/>
</dbReference>
<dbReference type="EnsemblFungi" id="EAL93809">
    <property type="protein sequence ID" value="EAL93809"/>
    <property type="gene ID" value="AFUA_2G15130"/>
</dbReference>
<dbReference type="GeneID" id="3512747"/>
<dbReference type="KEGG" id="afm:AFUA_2G15130"/>
<dbReference type="VEuPathDB" id="FungiDB:Afu2g15130"/>
<dbReference type="eggNOG" id="KOG0065">
    <property type="taxonomic scope" value="Eukaryota"/>
</dbReference>
<dbReference type="HOGENOM" id="CLU_000604_35_0_1"/>
<dbReference type="InParanoid" id="Q4X006"/>
<dbReference type="OMA" id="QRMFQQY"/>
<dbReference type="OrthoDB" id="245989at2759"/>
<dbReference type="PHI-base" id="PHI:4229"/>
<dbReference type="Proteomes" id="UP000002530">
    <property type="component" value="Chromosome 2"/>
</dbReference>
<dbReference type="GO" id="GO:0005886">
    <property type="term" value="C:plasma membrane"/>
    <property type="evidence" value="ECO:0000314"/>
    <property type="project" value="AspGD"/>
</dbReference>
<dbReference type="GO" id="GO:0140359">
    <property type="term" value="F:ABC-type transporter activity"/>
    <property type="evidence" value="ECO:0007669"/>
    <property type="project" value="InterPro"/>
</dbReference>
<dbReference type="GO" id="GO:0005524">
    <property type="term" value="F:ATP binding"/>
    <property type="evidence" value="ECO:0007669"/>
    <property type="project" value="UniProtKB-KW"/>
</dbReference>
<dbReference type="GO" id="GO:0016887">
    <property type="term" value="F:ATP hydrolysis activity"/>
    <property type="evidence" value="ECO:0007669"/>
    <property type="project" value="InterPro"/>
</dbReference>
<dbReference type="GO" id="GO:1990961">
    <property type="term" value="P:xenobiotic detoxification by transmembrane export across the plasma membrane"/>
    <property type="evidence" value="ECO:0007669"/>
    <property type="project" value="InterPro"/>
</dbReference>
<dbReference type="CDD" id="cd03233">
    <property type="entry name" value="ABCG_PDR_domain1"/>
    <property type="match status" value="1"/>
</dbReference>
<dbReference type="CDD" id="cd03232">
    <property type="entry name" value="ABCG_PDR_domain2"/>
    <property type="match status" value="1"/>
</dbReference>
<dbReference type="FunFam" id="3.40.50.300:FF:000881">
    <property type="entry name" value="ABC multidrug transporter A-1"/>
    <property type="match status" value="1"/>
</dbReference>
<dbReference type="FunFam" id="3.40.50.300:FF:000054">
    <property type="entry name" value="ABC multidrug transporter atrF"/>
    <property type="match status" value="1"/>
</dbReference>
<dbReference type="Gene3D" id="3.40.50.300">
    <property type="entry name" value="P-loop containing nucleotide triphosphate hydrolases"/>
    <property type="match status" value="2"/>
</dbReference>
<dbReference type="InterPro" id="IPR003593">
    <property type="entry name" value="AAA+_ATPase"/>
</dbReference>
<dbReference type="InterPro" id="IPR013525">
    <property type="entry name" value="ABC2_TM"/>
</dbReference>
<dbReference type="InterPro" id="IPR029481">
    <property type="entry name" value="ABC_trans_N"/>
</dbReference>
<dbReference type="InterPro" id="IPR003439">
    <property type="entry name" value="ABC_transporter-like_ATP-bd"/>
</dbReference>
<dbReference type="InterPro" id="IPR017871">
    <property type="entry name" value="ABC_transporter-like_CS"/>
</dbReference>
<dbReference type="InterPro" id="IPR043926">
    <property type="entry name" value="ABCG_dom"/>
</dbReference>
<dbReference type="InterPro" id="IPR034001">
    <property type="entry name" value="ABCG_PDR_1"/>
</dbReference>
<dbReference type="InterPro" id="IPR034003">
    <property type="entry name" value="ABCG_PDR_2"/>
</dbReference>
<dbReference type="InterPro" id="IPR005285">
    <property type="entry name" value="Drug-R_PDR/CDR"/>
</dbReference>
<dbReference type="InterPro" id="IPR027417">
    <property type="entry name" value="P-loop_NTPase"/>
</dbReference>
<dbReference type="InterPro" id="IPR010929">
    <property type="entry name" value="PDR_CDR_ABC"/>
</dbReference>
<dbReference type="NCBIfam" id="TIGR00956">
    <property type="entry name" value="3a01205"/>
    <property type="match status" value="1"/>
</dbReference>
<dbReference type="PANTHER" id="PTHR19241">
    <property type="entry name" value="ATP-BINDING CASSETTE TRANSPORTER"/>
    <property type="match status" value="1"/>
</dbReference>
<dbReference type="Pfam" id="PF01061">
    <property type="entry name" value="ABC2_membrane"/>
    <property type="match status" value="2"/>
</dbReference>
<dbReference type="Pfam" id="PF19055">
    <property type="entry name" value="ABC2_membrane_7"/>
    <property type="match status" value="1"/>
</dbReference>
<dbReference type="Pfam" id="PF00005">
    <property type="entry name" value="ABC_tran"/>
    <property type="match status" value="2"/>
</dbReference>
<dbReference type="Pfam" id="PF14510">
    <property type="entry name" value="ABC_trans_N"/>
    <property type="match status" value="1"/>
</dbReference>
<dbReference type="Pfam" id="PF06422">
    <property type="entry name" value="PDR_CDR"/>
    <property type="match status" value="1"/>
</dbReference>
<dbReference type="SMART" id="SM00382">
    <property type="entry name" value="AAA"/>
    <property type="match status" value="2"/>
</dbReference>
<dbReference type="SUPFAM" id="SSF52540">
    <property type="entry name" value="P-loop containing nucleoside triphosphate hydrolases"/>
    <property type="match status" value="2"/>
</dbReference>
<dbReference type="PROSITE" id="PS00211">
    <property type="entry name" value="ABC_TRANSPORTER_1"/>
    <property type="match status" value="1"/>
</dbReference>
<dbReference type="PROSITE" id="PS50893">
    <property type="entry name" value="ABC_TRANSPORTER_2"/>
    <property type="match status" value="2"/>
</dbReference>
<comment type="function">
    <text evidence="5 6 7">Pleiotropic ABC efflux transporter that confers resistance to structurally and functionally unrelated compounds including azoles such as itraconazole, posaconazole, and voriconazole.</text>
</comment>
<comment type="catalytic activity">
    <reaction evidence="6">
        <text>itraconazole(in) + ATP + H2O = itraconazole(out) + ADP + phosphate + H(+)</text>
        <dbReference type="Rhea" id="RHEA:33503"/>
        <dbReference type="ChEBI" id="CHEBI:6076"/>
        <dbReference type="ChEBI" id="CHEBI:15377"/>
        <dbReference type="ChEBI" id="CHEBI:15378"/>
        <dbReference type="ChEBI" id="CHEBI:30616"/>
        <dbReference type="ChEBI" id="CHEBI:43474"/>
        <dbReference type="ChEBI" id="CHEBI:456216"/>
    </reaction>
    <physiologicalReaction direction="left-to-right" evidence="6">
        <dbReference type="Rhea" id="RHEA:33504"/>
    </physiologicalReaction>
</comment>
<comment type="catalytic activity">
    <reaction evidence="6">
        <text>voriconazole(in) + ATP + H2O = voriconazole(out) + ADP + phosphate + H(+)</text>
        <dbReference type="Rhea" id="RHEA:61912"/>
        <dbReference type="ChEBI" id="CHEBI:10023"/>
        <dbReference type="ChEBI" id="CHEBI:15377"/>
        <dbReference type="ChEBI" id="CHEBI:15378"/>
        <dbReference type="ChEBI" id="CHEBI:30616"/>
        <dbReference type="ChEBI" id="CHEBI:43474"/>
        <dbReference type="ChEBI" id="CHEBI:456216"/>
    </reaction>
    <physiologicalReaction direction="left-to-right" evidence="6">
        <dbReference type="Rhea" id="RHEA:61913"/>
    </physiologicalReaction>
</comment>
<comment type="activity regulation">
    <text evidence="7">The efflux inhibitor FK506 impairs the transport activity.</text>
</comment>
<comment type="subcellular location">
    <subcellularLocation>
        <location evidence="6">Cell membrane</location>
        <topology evidence="1">Multi-pass membrane protein</topology>
    </subcellularLocation>
</comment>
<comment type="induction">
    <text evidence="6 7">Expression is induced upon voriconazole treatment (PubMed:24123268). Expression is also induced in triazole-resistant isolates (PubMed:32209680).</text>
</comment>
<comment type="disruption phenotype">
    <text evidence="6">Leads to decreased azole resistance, including itraconazole, posaconazole and voriconazole.</text>
</comment>
<comment type="similarity">
    <text evidence="9">Belongs to the ABC transporter superfamily. ABCG family. PDR (TC 3.A.1.205) subfamily.</text>
</comment>
<organism>
    <name type="scientific">Aspergillus fumigatus (strain ATCC MYA-4609 / CBS 101355 / FGSC A1100 / Af293)</name>
    <name type="common">Neosartorya fumigata</name>
    <dbReference type="NCBI Taxonomy" id="330879"/>
    <lineage>
        <taxon>Eukaryota</taxon>
        <taxon>Fungi</taxon>
        <taxon>Dikarya</taxon>
        <taxon>Ascomycota</taxon>
        <taxon>Pezizomycotina</taxon>
        <taxon>Eurotiomycetes</taxon>
        <taxon>Eurotiomycetidae</taxon>
        <taxon>Eurotiales</taxon>
        <taxon>Aspergillaceae</taxon>
        <taxon>Aspergillus</taxon>
        <taxon>Aspergillus subgen. Fumigati</taxon>
    </lineage>
</organism>
<sequence>MAMQPSYPAPFGAAAISSSAGQEVASTIRRQFTDADADRIVETPLGEKADSSDTAGPDSEDGIDQEGHDKITALARSLSQISQKSAGPTNTFLDPSSDPELDPNSDKFSSRKWMKNLLHIKTRDPDRYPRRTAGVSFRNLNAYGYGTAADYQADVANMWLKGFGWLRSILGCRNRVQIDILRNFEGFVRSGEMLVVLGRPGSGCSTFLKTIAGETHGLWLDEGTHIQYEGISWDEMHSRFRGEVIYQAETEIHFPQLTAGETLLFAAQARTPANRFPGVSREQYATHMRDVVMTMLGLSHTVNTRIGNEYIRGVSGGERKRVSIAETILCGCPLQCWDNSTRGLDSSTALEFVKNLRLSTDYTGSTAIVAIYQASQAIYDIFDKVIVLYEGRQIYFGKASDAKRFFIDMGFDCPDRQTTGDFLTSLTSPSERLVRKGYEALVPRTPDEFAARWRESAERQRLLADIEAFENESPLGGSKYKEFTVSRAAEKAKGTRAPSPYTLSYPMQIRLCLRRGFLRLKGDMSMTLATVIGNSIMAFIVSSVFYNLDQTTNSFFSRGALLFFAILLNAFASSLEILTLWQQRPIVEKHDKYALYHPSAEAISSMIVDLPSKFLVSVVFNLILYFMTNLRRTPGHFFVFYLFSVTITLTMSNIFRWIGAISRSMAQAMVPSSIFMMILVIYTGFTIPVRDMHPWFKWLNYLNPIGYAFESLMINEFSDRRFPCAQYVPAGPGYEDVPLSSKICSQKGAVAGQDYVDGDAFINTSYRYFSSHLWRNYGIILGFFFFFLAAYIICSELVRAKPSKGEILVFPRGKIPAFVKKSRRDGDLEGAPTFEKQQLDNAGHDSTAAIVKQTSIFHWQDVCYDIKVKGETRRILDHIDGWVKPGTLTALMGVTGAGKTSLLDVLANRVTMGVITGEMLVDGRMRDDSFQRKTGYVQQQDLHLETSTVREALIFSATLRQPASTPHKEKLAYVEEVIKMLNMEEYAEAVVGVLGEGLNVEQRKRLTIGVELAAKPALLCFFDEPTSGLDSQTAWSICTLMRKLADHGQAILCTIHQPSAILMQQFDRLLFLAKGGKTVYFGELGPNMETLIKYFENKGSSKCPKNANPAEWMLEVIGAAPGSHADQDWPEVWNNSPERAQVRAELARMKEELLQRPPPPRTKEYGEFAMPLWAQFLVCLQRMFQQYWRSPSYIYSKAATSIIPPLFIGFTFWREPTSLQGLQNQMFAIFMLLVIFPNLVQQMMPYFVTQRALYEVRERPSKAYSWKAFMLASILVELPWNILMAVPAYFCWYYPIGLYRNAYPTDSVTERGGTMFLLILIFMMFTSTFSSMIIAGIEQPETGGNIAQLLFSLCLIFNGVLASPSALPGFWIFMYRVSPFTYLVSAVLSVGLAGTSVKCSDIEILHVPPPQGQNCSSFLDAYVQMSHGRLLNPEATSDCQVCPVADTDTFLAQVSISYSDRWRNVGLLFVYIVFNIFAAIFLYWLIRVPKKRSRKIKEE</sequence>
<protein>
    <recommendedName>
        <fullName evidence="9">ABC multidrug transporter A-2</fullName>
    </recommendedName>
</protein>
<reference key="1">
    <citation type="journal article" date="2005" name="Nature">
        <title>Genomic sequence of the pathogenic and allergenic filamentous fungus Aspergillus fumigatus.</title>
        <authorList>
            <person name="Nierman W.C."/>
            <person name="Pain A."/>
            <person name="Anderson M.J."/>
            <person name="Wortman J.R."/>
            <person name="Kim H.S."/>
            <person name="Arroyo J."/>
            <person name="Berriman M."/>
            <person name="Abe K."/>
            <person name="Archer D.B."/>
            <person name="Bermejo C."/>
            <person name="Bennett J.W."/>
            <person name="Bowyer P."/>
            <person name="Chen D."/>
            <person name="Collins M."/>
            <person name="Coulsen R."/>
            <person name="Davies R."/>
            <person name="Dyer P.S."/>
            <person name="Farman M.L."/>
            <person name="Fedorova N."/>
            <person name="Fedorova N.D."/>
            <person name="Feldblyum T.V."/>
            <person name="Fischer R."/>
            <person name="Fosker N."/>
            <person name="Fraser A."/>
            <person name="Garcia J.L."/>
            <person name="Garcia M.J."/>
            <person name="Goble A."/>
            <person name="Goldman G.H."/>
            <person name="Gomi K."/>
            <person name="Griffith-Jones S."/>
            <person name="Gwilliam R."/>
            <person name="Haas B.J."/>
            <person name="Haas H."/>
            <person name="Harris D.E."/>
            <person name="Horiuchi H."/>
            <person name="Huang J."/>
            <person name="Humphray S."/>
            <person name="Jimenez J."/>
            <person name="Keller N."/>
            <person name="Khouri H."/>
            <person name="Kitamoto K."/>
            <person name="Kobayashi T."/>
            <person name="Konzack S."/>
            <person name="Kulkarni R."/>
            <person name="Kumagai T."/>
            <person name="Lafton A."/>
            <person name="Latge J.-P."/>
            <person name="Li W."/>
            <person name="Lord A."/>
            <person name="Lu C."/>
            <person name="Majoros W.H."/>
            <person name="May G.S."/>
            <person name="Miller B.L."/>
            <person name="Mohamoud Y."/>
            <person name="Molina M."/>
            <person name="Monod M."/>
            <person name="Mouyna I."/>
            <person name="Mulligan S."/>
            <person name="Murphy L.D."/>
            <person name="O'Neil S."/>
            <person name="Paulsen I."/>
            <person name="Penalva M.A."/>
            <person name="Pertea M."/>
            <person name="Price C."/>
            <person name="Pritchard B.L."/>
            <person name="Quail M.A."/>
            <person name="Rabbinowitsch E."/>
            <person name="Rawlins N."/>
            <person name="Rajandream M.A."/>
            <person name="Reichard U."/>
            <person name="Renauld H."/>
            <person name="Robson G.D."/>
            <person name="Rodriguez de Cordoba S."/>
            <person name="Rodriguez-Pena J.M."/>
            <person name="Ronning C.M."/>
            <person name="Rutter S."/>
            <person name="Salzberg S.L."/>
            <person name="Sanchez M."/>
            <person name="Sanchez-Ferrero J.C."/>
            <person name="Saunders D."/>
            <person name="Seeger K."/>
            <person name="Squares R."/>
            <person name="Squares S."/>
            <person name="Takeuchi M."/>
            <person name="Tekaia F."/>
            <person name="Turner G."/>
            <person name="Vazquez de Aldana C.R."/>
            <person name="Weidman J."/>
            <person name="White O."/>
            <person name="Woodward J.R."/>
            <person name="Yu J.-H."/>
            <person name="Fraser C.M."/>
            <person name="Galagan J.E."/>
            <person name="Asai K."/>
            <person name="Machida M."/>
            <person name="Hall N."/>
            <person name="Barrell B.G."/>
            <person name="Denning D.W."/>
        </authorList>
    </citation>
    <scope>NUCLEOTIDE SEQUENCE [LARGE SCALE GENOMIC DNA]</scope>
    <source>
        <strain>ATCC MYA-4609 / CBS 101355 / FGSC A1100 / Af293</strain>
    </source>
</reference>
<reference key="2">
    <citation type="journal article" date="2013" name="Eukaryot. Cell">
        <title>Contributions of Aspergillus fumigatus ATP-binding cassette transporter proteins to drug resistance and virulence.</title>
        <authorList>
            <person name="Paul S."/>
            <person name="Diekema D."/>
            <person name="Moye-Rowley W.S."/>
        </authorList>
    </citation>
    <scope>FUNCTION</scope>
    <scope>INDUCTION</scope>
    <scope>DISRUPTION PHENOTYPE</scope>
    <scope>SUBCELLULAR LOCATION</scope>
    <scope>CATALYTIC ACTIVITY</scope>
</reference>
<reference key="3">
    <citation type="journal article" date="2013" name="Fungal Genet. Biol.">
        <title>Functional analysis of an ATP-binding cassette transporter protein from Aspergillus fumigatus by heterologous expression in Saccharomyces cerevisiae.</title>
        <authorList>
            <person name="Paul S."/>
            <person name="Moye-Rowley W.S."/>
        </authorList>
    </citation>
    <scope>FUNCTION</scope>
</reference>
<reference key="4">
    <citation type="journal article" date="2020" name="MBio">
        <title>Characterization of the efflux capability and substrate specificity of Aspergillus fumigatus PDR5-like ABC transporters expressed in Saccharomyces cerevisiae.</title>
        <authorList>
            <person name="Esquivel B.D."/>
            <person name="Rybak J.M."/>
            <person name="Barker K.S."/>
            <person name="Fortwendel J.R."/>
            <person name="Rogers P.D."/>
            <person name="White T.C."/>
        </authorList>
    </citation>
    <scope>FUNCTION</scope>
    <scope>CATALYTIC ACTIVITY</scope>
    <scope>SUBSTRATE SPECIFICITY</scope>
    <scope>ACTIVITY REGULATION</scope>
    <scope>INDUCTION</scope>
</reference>